<reference key="1">
    <citation type="journal article" date="1984" name="J. Virol.">
        <title>Nucleotide sequence of an infectious molecularly cloned genome of ground squirrel hepatitis virus.</title>
        <authorList>
            <person name="Seeger C."/>
            <person name="Ganem D."/>
            <person name="Varmus H.E."/>
        </authorList>
    </citation>
    <scope>NUCLEOTIDE SEQUENCE [GENOMIC DNA]</scope>
</reference>
<dbReference type="EMBL" id="K02715">
    <property type="protein sequence ID" value="AAA46758.1"/>
    <property type="molecule type" value="Genomic_DNA"/>
</dbReference>
<dbReference type="PIR" id="A03721">
    <property type="entry name" value="QQVLS"/>
</dbReference>
<dbReference type="RefSeq" id="NP_040996.1">
    <property type="nucleotide sequence ID" value="NC_001484.1"/>
</dbReference>
<dbReference type="KEGG" id="vg:1488457"/>
<dbReference type="OrthoDB" id="20330at10239"/>
<dbReference type="Proteomes" id="UP000009156">
    <property type="component" value="Genome"/>
</dbReference>
<dbReference type="GO" id="GO:0033650">
    <property type="term" value="C:host cell mitochondrion"/>
    <property type="evidence" value="ECO:0007669"/>
    <property type="project" value="UniProtKB-SubCell"/>
</dbReference>
<dbReference type="GO" id="GO:0042025">
    <property type="term" value="C:host cell nucleus"/>
    <property type="evidence" value="ECO:0007669"/>
    <property type="project" value="UniProtKB-SubCell"/>
</dbReference>
<dbReference type="GO" id="GO:0006351">
    <property type="term" value="P:DNA-templated transcription"/>
    <property type="evidence" value="ECO:0007669"/>
    <property type="project" value="UniProtKB-UniRule"/>
</dbReference>
<dbReference type="GO" id="GO:0085033">
    <property type="term" value="P:symbiont-mediated activation of host NF-kappaB cascade"/>
    <property type="evidence" value="ECO:0007669"/>
    <property type="project" value="UniProtKB-UniRule"/>
</dbReference>
<dbReference type="GO" id="GO:0039592">
    <property type="term" value="P:symbiont-mediated arrest of host cell cycle during G2/M transition"/>
    <property type="evidence" value="ECO:0007669"/>
    <property type="project" value="UniProtKB-UniRule"/>
</dbReference>
<dbReference type="GO" id="GO:0019079">
    <property type="term" value="P:viral genome replication"/>
    <property type="evidence" value="ECO:0007669"/>
    <property type="project" value="UniProtKB-UniRule"/>
</dbReference>
<dbReference type="HAMAP" id="MF_04074">
    <property type="entry name" value="HBV_X"/>
    <property type="match status" value="1"/>
</dbReference>
<dbReference type="InterPro" id="IPR000236">
    <property type="entry name" value="Transactivation_prot_X"/>
</dbReference>
<dbReference type="Pfam" id="PF00739">
    <property type="entry name" value="X"/>
    <property type="match status" value="1"/>
</dbReference>
<sequence length="138" mass="15057">MAARLCCQLDSSRDVLLLRPLRGQPSGPSVSGTSAGSPSSAASAFSSGHQADIPVGRLPACFYSSAGPCCLGFTCADLRTMDSTVNFVPWHAKRQLGMMQKDFWTAYIRDQLLTLWEEGIIDPRLKLFVLGGCRHKYM</sequence>
<accession>P03168</accession>
<organism>
    <name type="scientific">Ground squirrel hepatitis virus (strain 27)</name>
    <name type="common">GSHV</name>
    <dbReference type="NCBI Taxonomy" id="10406"/>
    <lineage>
        <taxon>Viruses</taxon>
        <taxon>Riboviria</taxon>
        <taxon>Pararnavirae</taxon>
        <taxon>Artverviricota</taxon>
        <taxon>Revtraviricetes</taxon>
        <taxon>Blubervirales</taxon>
        <taxon>Hepadnaviridae</taxon>
        <taxon>Orthohepadnavirus</taxon>
    </lineage>
</organism>
<protein>
    <recommendedName>
        <fullName evidence="1">Protein X</fullName>
    </recommendedName>
    <alternativeName>
        <fullName evidence="1">HBx</fullName>
    </alternativeName>
    <alternativeName>
        <fullName evidence="1">Peptide X</fullName>
    </alternativeName>
    <alternativeName>
        <fullName evidence="1">pX</fullName>
    </alternativeName>
</protein>
<gene>
    <name evidence="1" type="primary">X</name>
</gene>
<name>X_GSHV</name>
<organismHost>
    <name type="scientific">Otospermophilus beecheyi</name>
    <name type="common">California ground squirrel</name>
    <name type="synonym">Spermophilus beecheyi</name>
    <dbReference type="NCBI Taxonomy" id="34862"/>
</organismHost>
<evidence type="ECO:0000255" key="1">
    <source>
        <dbReference type="HAMAP-Rule" id="MF_04074"/>
    </source>
</evidence>
<evidence type="ECO:0000256" key="2">
    <source>
        <dbReference type="SAM" id="MobiDB-lite"/>
    </source>
</evidence>
<keyword id="KW-1074">Activation of host NF-kappa-B by virus</keyword>
<keyword id="KW-0010">Activator</keyword>
<keyword id="KW-0053">Apoptosis</keyword>
<keyword id="KW-1035">Host cytoplasm</keyword>
<keyword id="KW-1079">Host G2/M cell cycle arrest by virus</keyword>
<keyword id="KW-1045">Host mitochondrion</keyword>
<keyword id="KW-1048">Host nucleus</keyword>
<keyword id="KW-0945">Host-virus interaction</keyword>
<keyword id="KW-1121">Modulation of host cell cycle by virus</keyword>
<keyword id="KW-0804">Transcription</keyword>
<keyword id="KW-0805">Transcription regulation</keyword>
<proteinExistence type="inferred from homology"/>
<feature type="chain" id="PRO_0000222358" description="Protein X">
    <location>
        <begin position="1"/>
        <end position="138"/>
    </location>
</feature>
<feature type="region of interest" description="Disordered" evidence="2">
    <location>
        <begin position="20"/>
        <end position="43"/>
    </location>
</feature>
<feature type="region of interest" description="Mitochondrial targeting sequence" evidence="1">
    <location>
        <begin position="68"/>
        <end position="113"/>
    </location>
</feature>
<feature type="compositionally biased region" description="Low complexity" evidence="2">
    <location>
        <begin position="25"/>
        <end position="43"/>
    </location>
</feature>
<comment type="function">
    <text evidence="1">Multifunctional protein that plays a role in silencing host antiviral defenses and promoting viral transcription. Does not seem to be essential for HBV infection. May be directly involved in development of cirrhosis and liver cancer (hepatocellular carcinoma). Most of cytosolic activities involve modulation of cytosolic calcium. The effect on apoptosis is controversial depending on the cell types in which the studies have been conducted. May induce apoptosis by localizing in mitochondria and causing loss of mitochondrial membrane potential. May also modulate apoptosis by binding host CFLAR, a key regulator of the death-inducing signaling complex (DISC). Promotes viral transcription by using the host E3 ubiquitin ligase DDB1 to target the SMC5-SMC6 complex to proteasomal degradation. This host complex would otherwise bind to viral episomal DNA, and prevents its transcription. Moderately stimulates transcription of many different viral and cellular transcription elements. Promoters and enhancers stimulated by HBx contain DNA binding sites for NF-kappa-B, AP-1, AP-2, c-EBP, ATF/CREB, or the calcium-activated factor NF-AT.</text>
</comment>
<comment type="subunit">
    <text evidence="1">May form homodimer. May interact with host CEBPA, CFLAR, CREB1, DDB1, E4F1, HBXIP, HSPD1/HSP60, NFKBIA, POLR2E and SMAD4. Interacts with host SMC5-SMC6 complex and induces its degradation. Interacts with host TRPC4AP; leading to prevent ubiquitination of TRPC4AP. Interacts with host PLSCR1; this interaction promotes ubiquitination and degradation of HBx and impairs HBx-mediated cell proliferation.</text>
</comment>
<comment type="subcellular location">
    <subcellularLocation>
        <location evidence="1">Host cytoplasm</location>
    </subcellularLocation>
    <subcellularLocation>
        <location evidence="1">Host nucleus</location>
    </subcellularLocation>
    <subcellularLocation>
        <location evidence="1">Host mitochondrion</location>
    </subcellularLocation>
    <text evidence="1">Mainly cytoplasmic as only a fraction is detected in the nucleus. In cytoplasm, a minor fraction associates with mitochondria or proteasomes.</text>
</comment>
<comment type="PTM">
    <text evidence="1">A fraction may be phosphorylated in insect cells and HepG2 cells, a human hepatoblastoma cell line. Phosphorylated in vitro by host protein kinase C or mitogen-activated protein kinase. N-acetylated in insect cells.</text>
</comment>
<comment type="similarity">
    <text evidence="1">Belongs to the orthohepadnavirus protein X family.</text>
</comment>